<reference key="1">
    <citation type="journal article" date="2002" name="Environ. Microbiol.">
        <title>Complete genome sequence and comparative analysis of the metabolically versatile Pseudomonas putida KT2440.</title>
        <authorList>
            <person name="Nelson K.E."/>
            <person name="Weinel C."/>
            <person name="Paulsen I.T."/>
            <person name="Dodson R.J."/>
            <person name="Hilbert H."/>
            <person name="Martins dos Santos V.A.P."/>
            <person name="Fouts D.E."/>
            <person name="Gill S.R."/>
            <person name="Pop M."/>
            <person name="Holmes M."/>
            <person name="Brinkac L.M."/>
            <person name="Beanan M.J."/>
            <person name="DeBoy R.T."/>
            <person name="Daugherty S.C."/>
            <person name="Kolonay J.F."/>
            <person name="Madupu R."/>
            <person name="Nelson W.C."/>
            <person name="White O."/>
            <person name="Peterson J.D."/>
            <person name="Khouri H.M."/>
            <person name="Hance I."/>
            <person name="Chris Lee P."/>
            <person name="Holtzapple E.K."/>
            <person name="Scanlan D."/>
            <person name="Tran K."/>
            <person name="Moazzez A."/>
            <person name="Utterback T.R."/>
            <person name="Rizzo M."/>
            <person name="Lee K."/>
            <person name="Kosack D."/>
            <person name="Moestl D."/>
            <person name="Wedler H."/>
            <person name="Lauber J."/>
            <person name="Stjepandic D."/>
            <person name="Hoheisel J."/>
            <person name="Straetz M."/>
            <person name="Heim S."/>
            <person name="Kiewitz C."/>
            <person name="Eisen J.A."/>
            <person name="Timmis K.N."/>
            <person name="Duesterhoeft A."/>
            <person name="Tuemmler B."/>
            <person name="Fraser C.M."/>
        </authorList>
    </citation>
    <scope>NUCLEOTIDE SEQUENCE [LARGE SCALE GENOMIC DNA]</scope>
    <source>
        <strain>ATCC 47054 / DSM 6125 / CFBP 8728 / NCIMB 11950 / KT2440</strain>
    </source>
</reference>
<sequence length="401" mass="46218">MSESAFAERIVHNLLDTDFYKLTMMQGVLHNYPDADVEWEFRCRNGEDLRPYLGEIRNQLERLADLTLDDGQLAFLERISFLKPDFLRFLRLFRFNLRYVHVGIENDQLFLRLKGPWLHVILFEVPLLAIISEVRNRNLHPHMRLAEARDQLYRKFDWLRAHASDDELAELQVADFGTRRRFSSRVQEEVARVLRDDFPGRFVGTSNVDLAWKLDIKPLGTMAHEWIMAHQQLGPRLIDSQIAALDCWVREYRGLLGIALTDCITMDAFLGDFDLYFAKLFDGLRHDSGEPVAWAEKAIAHYQKLGIDPMTKTLVFSDGLNLTRSLEIFRALRGRINVSFGIGTNLTCDIPGVAPMNIVLKMTDCNGAPVAKISDEAAKTQCRDENFVAYMRHVFKVPSKE</sequence>
<protein>
    <recommendedName>
        <fullName evidence="1">Nicotinate phosphoribosyltransferase</fullName>
        <shortName evidence="1">NAPRTase</shortName>
        <ecNumber evidence="1">6.3.4.21</ecNumber>
    </recommendedName>
</protein>
<evidence type="ECO:0000255" key="1">
    <source>
        <dbReference type="HAMAP-Rule" id="MF_00570"/>
    </source>
</evidence>
<evidence type="ECO:0000305" key="2"/>
<keyword id="KW-0436">Ligase</keyword>
<keyword id="KW-0597">Phosphoprotein</keyword>
<keyword id="KW-0662">Pyridine nucleotide biosynthesis</keyword>
<keyword id="KW-1185">Reference proteome</keyword>
<organism>
    <name type="scientific">Pseudomonas putida (strain ATCC 47054 / DSM 6125 / CFBP 8728 / NCIMB 11950 / KT2440)</name>
    <dbReference type="NCBI Taxonomy" id="160488"/>
    <lineage>
        <taxon>Bacteria</taxon>
        <taxon>Pseudomonadati</taxon>
        <taxon>Pseudomonadota</taxon>
        <taxon>Gammaproteobacteria</taxon>
        <taxon>Pseudomonadales</taxon>
        <taxon>Pseudomonadaceae</taxon>
        <taxon>Pseudomonas</taxon>
    </lineage>
</organism>
<proteinExistence type="inferred from homology"/>
<gene>
    <name evidence="1" type="primary">pncB</name>
    <name type="ordered locus">PP_4868</name>
</gene>
<name>PNCB_PSEPK</name>
<dbReference type="EC" id="6.3.4.21" evidence="1"/>
<dbReference type="EMBL" id="AE015451">
    <property type="protein sequence ID" value="AAN70437.1"/>
    <property type="status" value="ALT_INIT"/>
    <property type="molecule type" value="Genomic_DNA"/>
</dbReference>
<dbReference type="RefSeq" id="NP_746973.1">
    <property type="nucleotide sequence ID" value="NC_002947.4"/>
</dbReference>
<dbReference type="RefSeq" id="WP_049586710.1">
    <property type="nucleotide sequence ID" value="NZ_CP169744.1"/>
</dbReference>
<dbReference type="SMR" id="Q88DF7"/>
<dbReference type="STRING" id="160488.PP_4868"/>
<dbReference type="PaxDb" id="160488-PP_4868"/>
<dbReference type="GeneID" id="83682598"/>
<dbReference type="KEGG" id="ppu:PP_4868"/>
<dbReference type="PATRIC" id="fig|160488.4.peg.5200"/>
<dbReference type="eggNOG" id="COG1488">
    <property type="taxonomic scope" value="Bacteria"/>
</dbReference>
<dbReference type="HOGENOM" id="CLU_030991_1_0_6"/>
<dbReference type="OrthoDB" id="9771406at2"/>
<dbReference type="PhylomeDB" id="Q88DF7"/>
<dbReference type="UniPathway" id="UPA00253">
    <property type="reaction ID" value="UER00457"/>
</dbReference>
<dbReference type="Proteomes" id="UP000000556">
    <property type="component" value="Chromosome"/>
</dbReference>
<dbReference type="GO" id="GO:0005829">
    <property type="term" value="C:cytosol"/>
    <property type="evidence" value="ECO:0007669"/>
    <property type="project" value="TreeGrafter"/>
</dbReference>
<dbReference type="GO" id="GO:0004516">
    <property type="term" value="F:nicotinate phosphoribosyltransferase activity"/>
    <property type="evidence" value="ECO:0007669"/>
    <property type="project" value="UniProtKB-UniRule"/>
</dbReference>
<dbReference type="GO" id="GO:0034355">
    <property type="term" value="P:NAD biosynthetic process via the salvage pathway"/>
    <property type="evidence" value="ECO:0007669"/>
    <property type="project" value="TreeGrafter"/>
</dbReference>
<dbReference type="CDD" id="cd01401">
    <property type="entry name" value="PncB_like"/>
    <property type="match status" value="1"/>
</dbReference>
<dbReference type="Gene3D" id="3.20.140.10">
    <property type="entry name" value="nicotinate phosphoribosyltransferase"/>
    <property type="match status" value="1"/>
</dbReference>
<dbReference type="HAMAP" id="MF_00570">
    <property type="entry name" value="NAPRTase"/>
    <property type="match status" value="1"/>
</dbReference>
<dbReference type="InterPro" id="IPR041525">
    <property type="entry name" value="N/Namide_PRibTrfase"/>
</dbReference>
<dbReference type="InterPro" id="IPR040727">
    <property type="entry name" value="NAPRTase_N"/>
</dbReference>
<dbReference type="InterPro" id="IPR006406">
    <property type="entry name" value="Nic_PRibTrfase"/>
</dbReference>
<dbReference type="InterPro" id="IPR007229">
    <property type="entry name" value="Nic_PRibTrfase-Fam"/>
</dbReference>
<dbReference type="InterPro" id="IPR036068">
    <property type="entry name" value="Nicotinate_pribotase-like_C"/>
</dbReference>
<dbReference type="NCBIfam" id="TIGR01514">
    <property type="entry name" value="NAPRTase"/>
    <property type="match status" value="1"/>
</dbReference>
<dbReference type="NCBIfam" id="NF003704">
    <property type="entry name" value="PRK05321.1"/>
    <property type="match status" value="1"/>
</dbReference>
<dbReference type="PANTHER" id="PTHR11098">
    <property type="entry name" value="NICOTINATE PHOSPHORIBOSYLTRANSFERASE"/>
    <property type="match status" value="1"/>
</dbReference>
<dbReference type="PANTHER" id="PTHR11098:SF1">
    <property type="entry name" value="NICOTINATE PHOSPHORIBOSYLTRANSFERASE"/>
    <property type="match status" value="1"/>
</dbReference>
<dbReference type="Pfam" id="PF04095">
    <property type="entry name" value="NAPRTase"/>
    <property type="match status" value="1"/>
</dbReference>
<dbReference type="Pfam" id="PF17767">
    <property type="entry name" value="NAPRTase_N"/>
    <property type="match status" value="1"/>
</dbReference>
<dbReference type="PIRSF" id="PIRSF000484">
    <property type="entry name" value="NAPRT"/>
    <property type="match status" value="1"/>
</dbReference>
<dbReference type="SUPFAM" id="SSF51690">
    <property type="entry name" value="Nicotinate/Quinolinate PRTase C-terminal domain-like"/>
    <property type="match status" value="1"/>
</dbReference>
<dbReference type="SUPFAM" id="SSF54675">
    <property type="entry name" value="Nicotinate/Quinolinate PRTase N-terminal domain-like"/>
    <property type="match status" value="1"/>
</dbReference>
<accession>Q88DF7</accession>
<feature type="chain" id="PRO_0000205839" description="Nicotinate phosphoribosyltransferase">
    <location>
        <begin position="1"/>
        <end position="401"/>
    </location>
</feature>
<feature type="modified residue" description="Phosphohistidine; by autocatalysis" evidence="1">
    <location>
        <position position="224"/>
    </location>
</feature>
<comment type="function">
    <text evidence="1">Catalyzes the synthesis of beta-nicotinate D-ribonucleotide from nicotinate and 5-phospho-D-ribose 1-phosphate at the expense of ATP.</text>
</comment>
<comment type="catalytic activity">
    <reaction evidence="1">
        <text>nicotinate + 5-phospho-alpha-D-ribose 1-diphosphate + ATP + H2O = nicotinate beta-D-ribonucleotide + ADP + phosphate + diphosphate</text>
        <dbReference type="Rhea" id="RHEA:36163"/>
        <dbReference type="ChEBI" id="CHEBI:15377"/>
        <dbReference type="ChEBI" id="CHEBI:30616"/>
        <dbReference type="ChEBI" id="CHEBI:32544"/>
        <dbReference type="ChEBI" id="CHEBI:33019"/>
        <dbReference type="ChEBI" id="CHEBI:43474"/>
        <dbReference type="ChEBI" id="CHEBI:57502"/>
        <dbReference type="ChEBI" id="CHEBI:58017"/>
        <dbReference type="ChEBI" id="CHEBI:456216"/>
        <dbReference type="EC" id="6.3.4.21"/>
    </reaction>
</comment>
<comment type="pathway">
    <text evidence="1">Cofactor biosynthesis; NAD(+) biosynthesis; nicotinate D-ribonucleotide from nicotinate: step 1/1.</text>
</comment>
<comment type="PTM">
    <text evidence="1">Transiently phosphorylated on a His residue during the reaction cycle. Phosphorylation strongly increases the affinity for substrates and increases the rate of nicotinate D-ribonucleotide production. Dephosphorylation regenerates the low-affinity form of the enzyme, leading to product release.</text>
</comment>
<comment type="similarity">
    <text evidence="1">Belongs to the NAPRTase family.</text>
</comment>
<comment type="sequence caution" evidence="2">
    <conflict type="erroneous initiation">
        <sequence resource="EMBL-CDS" id="AAN70437"/>
    </conflict>
    <text>Extended N-terminus.</text>
</comment>